<organism>
    <name type="scientific">Corynebacterium diphtheriae (strain ATCC 700971 / NCTC 13129 / Biotype gravis)</name>
    <dbReference type="NCBI Taxonomy" id="257309"/>
    <lineage>
        <taxon>Bacteria</taxon>
        <taxon>Bacillati</taxon>
        <taxon>Actinomycetota</taxon>
        <taxon>Actinomycetes</taxon>
        <taxon>Mycobacteriales</taxon>
        <taxon>Corynebacteriaceae</taxon>
        <taxon>Corynebacterium</taxon>
    </lineage>
</organism>
<proteinExistence type="inferred from homology"/>
<sequence length="265" mass="30093">MRTLKKFSLRDLAYNAAYPFYEKRLMREIQGVRQPEHVAIMCDGNRRWAREAGFADVTHGHRVGAKKIGEMVRWCAHTDVELVTVYLLSTENLGRASDELQMLFDIIGDVVDELASPETNCRLRLVGHLDLLPDDVSRRLTQAQDSTNDNTGVFVNVAVGYGGRQEIVDAVRELIDAEAAAGTTATEMAEKISVDSISKHLYTSGQPDPDLVIRTSGEQRLSGFLLWQAAYSEIWFTDTYWPAFRRVDFLRALREYSKRSRRFGK</sequence>
<keyword id="KW-0460">Magnesium</keyword>
<keyword id="KW-0479">Metal-binding</keyword>
<keyword id="KW-1185">Reference proteome</keyword>
<keyword id="KW-0808">Transferase</keyword>
<comment type="function">
    <text evidence="1">Catalyzes the condensation of isopentenyl diphosphate (IPP) with allylic pyrophosphates generating different type of terpenoids.</text>
</comment>
<comment type="cofactor">
    <cofactor evidence="1">
        <name>Mg(2+)</name>
        <dbReference type="ChEBI" id="CHEBI:18420"/>
    </cofactor>
    <text evidence="1">Binds 2 magnesium ions per subunit.</text>
</comment>
<comment type="subunit">
    <text evidence="1">Homodimer.</text>
</comment>
<comment type="similarity">
    <text evidence="1">Belongs to the UPP synthase family.</text>
</comment>
<protein>
    <recommendedName>
        <fullName evidence="1">Isoprenyl transferase 1</fullName>
        <ecNumber evidence="1">2.5.1.-</ecNumber>
    </recommendedName>
</protein>
<name>ISPT1_CORDI</name>
<dbReference type="EC" id="2.5.1.-" evidence="1"/>
<dbReference type="EMBL" id="BX248356">
    <property type="protein sequence ID" value="CAE49448.1"/>
    <property type="molecule type" value="Genomic_DNA"/>
</dbReference>
<dbReference type="RefSeq" id="WP_010934675.1">
    <property type="nucleotide sequence ID" value="NC_002935.2"/>
</dbReference>
<dbReference type="SMR" id="P60480"/>
<dbReference type="STRING" id="257309.DIP0929"/>
<dbReference type="KEGG" id="cdi:DIP0929"/>
<dbReference type="HOGENOM" id="CLU_038505_2_0_11"/>
<dbReference type="Proteomes" id="UP000002198">
    <property type="component" value="Chromosome"/>
</dbReference>
<dbReference type="GO" id="GO:0005886">
    <property type="term" value="C:plasma membrane"/>
    <property type="evidence" value="ECO:0007669"/>
    <property type="project" value="TreeGrafter"/>
</dbReference>
<dbReference type="GO" id="GO:0045547">
    <property type="term" value="F:ditrans,polycis-polyprenyl diphosphate synthase [(2E,6E)-farnesyl diphosphate specific] activity"/>
    <property type="evidence" value="ECO:0007669"/>
    <property type="project" value="TreeGrafter"/>
</dbReference>
<dbReference type="GO" id="GO:0000287">
    <property type="term" value="F:magnesium ion binding"/>
    <property type="evidence" value="ECO:0007669"/>
    <property type="project" value="UniProtKB-UniRule"/>
</dbReference>
<dbReference type="GO" id="GO:0033850">
    <property type="term" value="F:Z-farnesyl diphosphate synthase activity"/>
    <property type="evidence" value="ECO:0007669"/>
    <property type="project" value="TreeGrafter"/>
</dbReference>
<dbReference type="GO" id="GO:0016094">
    <property type="term" value="P:polyprenol biosynthetic process"/>
    <property type="evidence" value="ECO:0007669"/>
    <property type="project" value="TreeGrafter"/>
</dbReference>
<dbReference type="CDD" id="cd00475">
    <property type="entry name" value="Cis_IPPS"/>
    <property type="match status" value="1"/>
</dbReference>
<dbReference type="FunFam" id="3.40.1180.10:FF:000003">
    <property type="entry name" value="Isoprenyl transferase 2"/>
    <property type="match status" value="1"/>
</dbReference>
<dbReference type="Gene3D" id="3.40.1180.10">
    <property type="entry name" value="Decaprenyl diphosphate synthase-like"/>
    <property type="match status" value="1"/>
</dbReference>
<dbReference type="HAMAP" id="MF_01139">
    <property type="entry name" value="ISPT"/>
    <property type="match status" value="1"/>
</dbReference>
<dbReference type="InterPro" id="IPR001441">
    <property type="entry name" value="UPP_synth-like"/>
</dbReference>
<dbReference type="InterPro" id="IPR018520">
    <property type="entry name" value="UPP_synth-like_CS"/>
</dbReference>
<dbReference type="InterPro" id="IPR036424">
    <property type="entry name" value="UPP_synth-like_sf"/>
</dbReference>
<dbReference type="NCBIfam" id="NF011403">
    <property type="entry name" value="PRK14828.1"/>
    <property type="match status" value="1"/>
</dbReference>
<dbReference type="NCBIfam" id="TIGR00055">
    <property type="entry name" value="uppS"/>
    <property type="match status" value="1"/>
</dbReference>
<dbReference type="PANTHER" id="PTHR10291:SF43">
    <property type="entry name" value="DEHYDRODOLICHYL DIPHOSPHATE SYNTHASE COMPLEX SUBUNIT DHDDS"/>
    <property type="match status" value="1"/>
</dbReference>
<dbReference type="PANTHER" id="PTHR10291">
    <property type="entry name" value="DEHYDRODOLICHYL DIPHOSPHATE SYNTHASE FAMILY MEMBER"/>
    <property type="match status" value="1"/>
</dbReference>
<dbReference type="Pfam" id="PF01255">
    <property type="entry name" value="Prenyltransf"/>
    <property type="match status" value="1"/>
</dbReference>
<dbReference type="SUPFAM" id="SSF64005">
    <property type="entry name" value="Undecaprenyl diphosphate synthase"/>
    <property type="match status" value="1"/>
</dbReference>
<dbReference type="PROSITE" id="PS01066">
    <property type="entry name" value="UPP_SYNTHASE"/>
    <property type="match status" value="1"/>
</dbReference>
<reference key="1">
    <citation type="journal article" date="2003" name="Nucleic Acids Res.">
        <title>The complete genome sequence and analysis of Corynebacterium diphtheriae NCTC13129.</title>
        <authorList>
            <person name="Cerdeno-Tarraga A.-M."/>
            <person name="Efstratiou A."/>
            <person name="Dover L.G."/>
            <person name="Holden M.T.G."/>
            <person name="Pallen M.J."/>
            <person name="Bentley S.D."/>
            <person name="Besra G.S."/>
            <person name="Churcher C.M."/>
            <person name="James K.D."/>
            <person name="De Zoysa A."/>
            <person name="Chillingworth T."/>
            <person name="Cronin A."/>
            <person name="Dowd L."/>
            <person name="Feltwell T."/>
            <person name="Hamlin N."/>
            <person name="Holroyd S."/>
            <person name="Jagels K."/>
            <person name="Moule S."/>
            <person name="Quail M.A."/>
            <person name="Rabbinowitsch E."/>
            <person name="Rutherford K.M."/>
            <person name="Thomson N.R."/>
            <person name="Unwin L."/>
            <person name="Whitehead S."/>
            <person name="Barrell B.G."/>
            <person name="Parkhill J."/>
        </authorList>
    </citation>
    <scope>NUCLEOTIDE SEQUENCE [LARGE SCALE GENOMIC DNA]</scope>
    <source>
        <strain>ATCC 700971 / NCTC 13129 / Biotype gravis</strain>
    </source>
</reference>
<accession>P60480</accession>
<feature type="chain" id="PRO_0000123601" description="Isoprenyl transferase 1">
    <location>
        <begin position="1"/>
        <end position="265"/>
    </location>
</feature>
<feature type="active site" evidence="1">
    <location>
        <position position="43"/>
    </location>
</feature>
<feature type="active site" description="Proton acceptor" evidence="1">
    <location>
        <position position="92"/>
    </location>
</feature>
<feature type="binding site" evidence="1">
    <location>
        <position position="43"/>
    </location>
    <ligand>
        <name>Mg(2+)</name>
        <dbReference type="ChEBI" id="CHEBI:18420"/>
    </ligand>
</feature>
<feature type="binding site" evidence="1">
    <location>
        <begin position="44"/>
        <end position="47"/>
    </location>
    <ligand>
        <name>substrate</name>
    </ligand>
</feature>
<feature type="binding site" evidence="1">
    <location>
        <position position="48"/>
    </location>
    <ligand>
        <name>substrate</name>
    </ligand>
</feature>
<feature type="binding site" evidence="1">
    <location>
        <position position="61"/>
    </location>
    <ligand>
        <name>substrate</name>
    </ligand>
</feature>
<feature type="binding site" evidence="1">
    <location>
        <begin position="89"/>
        <end position="91"/>
    </location>
    <ligand>
        <name>substrate</name>
    </ligand>
</feature>
<feature type="binding site" evidence="1">
    <location>
        <position position="95"/>
    </location>
    <ligand>
        <name>substrate</name>
    </ligand>
</feature>
<feature type="binding site" evidence="1">
    <location>
        <position position="214"/>
    </location>
    <ligand>
        <name>substrate</name>
    </ligand>
</feature>
<feature type="binding site" evidence="1">
    <location>
        <begin position="220"/>
        <end position="222"/>
    </location>
    <ligand>
        <name>substrate</name>
    </ligand>
</feature>
<feature type="binding site" evidence="1">
    <location>
        <position position="233"/>
    </location>
    <ligand>
        <name>Mg(2+)</name>
        <dbReference type="ChEBI" id="CHEBI:18420"/>
    </ligand>
</feature>
<gene>
    <name evidence="1" type="primary">uppS1</name>
    <name type="ordered locus">DIP0929</name>
</gene>
<evidence type="ECO:0000255" key="1">
    <source>
        <dbReference type="HAMAP-Rule" id="MF_01139"/>
    </source>
</evidence>